<evidence type="ECO:0000250" key="1"/>
<evidence type="ECO:0000255" key="2"/>
<evidence type="ECO:0000255" key="3">
    <source>
        <dbReference type="PROSITE-ProRule" id="PRU00686"/>
    </source>
</evidence>
<evidence type="ECO:0000305" key="4"/>
<evidence type="ECO:0000312" key="5">
    <source>
        <dbReference type="EMBL" id="EEE62346.1"/>
    </source>
</evidence>
<keyword id="KW-0001">2Fe-2S</keyword>
<keyword id="KW-0963">Cytoplasm</keyword>
<keyword id="KW-0408">Iron</keyword>
<keyword id="KW-0411">Iron-sulfur</keyword>
<keyword id="KW-0479">Metal-binding</keyword>
<keyword id="KW-0676">Redox-active center</keyword>
<keyword id="KW-1185">Reference proteome</keyword>
<comment type="function">
    <text evidence="4">May only reduce GSH-thiol disulfides, but not protein disulfides.</text>
</comment>
<comment type="subcellular location">
    <subcellularLocation>
        <location evidence="1">Cytoplasm</location>
    </subcellularLocation>
</comment>
<comment type="similarity">
    <text evidence="4">Belongs to the glutaredoxin family. CC-type subfamily.</text>
</comment>
<name>GRXS8_ORYSJ</name>
<feature type="chain" id="PRO_0000271277" description="Monothiol glutaredoxin-S8">
    <location>
        <begin position="1"/>
        <end position="114"/>
    </location>
</feature>
<feature type="domain" description="Glutaredoxin" evidence="3">
    <location>
        <begin position="1"/>
        <end position="113"/>
    </location>
</feature>
<feature type="binding site" evidence="2">
    <location>
        <position position="21"/>
    </location>
    <ligand>
        <name>[2Fe-2S] cluster</name>
        <dbReference type="ChEBI" id="CHEBI:190135"/>
        <note>ligand shared between dimeric partners</note>
    </ligand>
</feature>
<reference key="1">
    <citation type="journal article" date="2005" name="Mol. Genet. Genomics">
        <title>A fine physical map of the rice chromosome 5.</title>
        <authorList>
            <person name="Cheng C.-H."/>
            <person name="Chung M.C."/>
            <person name="Liu S.-M."/>
            <person name="Chen S.-K."/>
            <person name="Kao F.Y."/>
            <person name="Lin S.-J."/>
            <person name="Hsiao S.-H."/>
            <person name="Tseng I.C."/>
            <person name="Hsing Y.-I.C."/>
            <person name="Wu H.-P."/>
            <person name="Chen C.-S."/>
            <person name="Shaw J.-F."/>
            <person name="Wu J."/>
            <person name="Matsumoto T."/>
            <person name="Sasaki T."/>
            <person name="Chen H.-C."/>
            <person name="Chow T.-Y."/>
        </authorList>
    </citation>
    <scope>NUCLEOTIDE SEQUENCE [LARGE SCALE GENOMIC DNA]</scope>
    <source>
        <strain>cv. Nipponbare</strain>
    </source>
</reference>
<reference key="2">
    <citation type="journal article" date="2005" name="Nature">
        <title>The map-based sequence of the rice genome.</title>
        <authorList>
            <consortium name="International rice genome sequencing project (IRGSP)"/>
        </authorList>
    </citation>
    <scope>NUCLEOTIDE SEQUENCE [LARGE SCALE GENOMIC DNA]</scope>
    <source>
        <strain>cv. Nipponbare</strain>
    </source>
</reference>
<reference key="3">
    <citation type="journal article" date="2013" name="Rice">
        <title>Improvement of the Oryza sativa Nipponbare reference genome using next generation sequence and optical map data.</title>
        <authorList>
            <person name="Kawahara Y."/>
            <person name="de la Bastide M."/>
            <person name="Hamilton J.P."/>
            <person name="Kanamori H."/>
            <person name="McCombie W.R."/>
            <person name="Ouyang S."/>
            <person name="Schwartz D.C."/>
            <person name="Tanaka T."/>
            <person name="Wu J."/>
            <person name="Zhou S."/>
            <person name="Childs K.L."/>
            <person name="Davidson R.M."/>
            <person name="Lin H."/>
            <person name="Quesada-Ocampo L."/>
            <person name="Vaillancourt B."/>
            <person name="Sakai H."/>
            <person name="Lee S.S."/>
            <person name="Kim J."/>
            <person name="Numa H."/>
            <person name="Itoh T."/>
            <person name="Buell C.R."/>
            <person name="Matsumoto T."/>
        </authorList>
    </citation>
    <scope>GENOME REANNOTATION</scope>
    <source>
        <strain>cv. Nipponbare</strain>
    </source>
</reference>
<reference key="4">
    <citation type="journal article" date="2005" name="PLoS Biol.">
        <title>The genomes of Oryza sativa: a history of duplications.</title>
        <authorList>
            <person name="Yu J."/>
            <person name="Wang J."/>
            <person name="Lin W."/>
            <person name="Li S."/>
            <person name="Li H."/>
            <person name="Zhou J."/>
            <person name="Ni P."/>
            <person name="Dong W."/>
            <person name="Hu S."/>
            <person name="Zeng C."/>
            <person name="Zhang J."/>
            <person name="Zhang Y."/>
            <person name="Li R."/>
            <person name="Xu Z."/>
            <person name="Li S."/>
            <person name="Li X."/>
            <person name="Zheng H."/>
            <person name="Cong L."/>
            <person name="Lin L."/>
            <person name="Yin J."/>
            <person name="Geng J."/>
            <person name="Li G."/>
            <person name="Shi J."/>
            <person name="Liu J."/>
            <person name="Lv H."/>
            <person name="Li J."/>
            <person name="Wang J."/>
            <person name="Deng Y."/>
            <person name="Ran L."/>
            <person name="Shi X."/>
            <person name="Wang X."/>
            <person name="Wu Q."/>
            <person name="Li C."/>
            <person name="Ren X."/>
            <person name="Wang J."/>
            <person name="Wang X."/>
            <person name="Li D."/>
            <person name="Liu D."/>
            <person name="Zhang X."/>
            <person name="Ji Z."/>
            <person name="Zhao W."/>
            <person name="Sun Y."/>
            <person name="Zhang Z."/>
            <person name="Bao J."/>
            <person name="Han Y."/>
            <person name="Dong L."/>
            <person name="Ji J."/>
            <person name="Chen P."/>
            <person name="Wu S."/>
            <person name="Liu J."/>
            <person name="Xiao Y."/>
            <person name="Bu D."/>
            <person name="Tan J."/>
            <person name="Yang L."/>
            <person name="Ye C."/>
            <person name="Zhang J."/>
            <person name="Xu J."/>
            <person name="Zhou Y."/>
            <person name="Yu Y."/>
            <person name="Zhang B."/>
            <person name="Zhuang S."/>
            <person name="Wei H."/>
            <person name="Liu B."/>
            <person name="Lei M."/>
            <person name="Yu H."/>
            <person name="Li Y."/>
            <person name="Xu H."/>
            <person name="Wei S."/>
            <person name="He X."/>
            <person name="Fang L."/>
            <person name="Zhang Z."/>
            <person name="Zhang Y."/>
            <person name="Huang X."/>
            <person name="Su Z."/>
            <person name="Tong W."/>
            <person name="Li J."/>
            <person name="Tong Z."/>
            <person name="Li S."/>
            <person name="Ye J."/>
            <person name="Wang L."/>
            <person name="Fang L."/>
            <person name="Lei T."/>
            <person name="Chen C.-S."/>
            <person name="Chen H.-C."/>
            <person name="Xu Z."/>
            <person name="Li H."/>
            <person name="Huang H."/>
            <person name="Zhang F."/>
            <person name="Xu H."/>
            <person name="Li N."/>
            <person name="Zhao C."/>
            <person name="Li S."/>
            <person name="Dong L."/>
            <person name="Huang Y."/>
            <person name="Li L."/>
            <person name="Xi Y."/>
            <person name="Qi Q."/>
            <person name="Li W."/>
            <person name="Zhang B."/>
            <person name="Hu W."/>
            <person name="Zhang Y."/>
            <person name="Tian X."/>
            <person name="Jiao Y."/>
            <person name="Liang X."/>
            <person name="Jin J."/>
            <person name="Gao L."/>
            <person name="Zheng W."/>
            <person name="Hao B."/>
            <person name="Liu S.-M."/>
            <person name="Wang W."/>
            <person name="Yuan L."/>
            <person name="Cao M."/>
            <person name="McDermott J."/>
            <person name="Samudrala R."/>
            <person name="Wang J."/>
            <person name="Wong G.K.-S."/>
            <person name="Yang H."/>
        </authorList>
    </citation>
    <scope>NUCLEOTIDE SEQUENCE [LARGE SCALE GENOMIC DNA]</scope>
    <source>
        <strain>cv. Nipponbare</strain>
    </source>
</reference>
<reference key="5">
    <citation type="journal article" date="2006" name="J. Exp. Bot.">
        <title>Genome-wide analysis of plant glutaredoxin systems.</title>
        <authorList>
            <person name="Rouhier N."/>
            <person name="Couturier J."/>
            <person name="Jacquot J.-P."/>
        </authorList>
    </citation>
    <scope>GENE FAMILY</scope>
</reference>
<proteinExistence type="inferred from homology"/>
<gene>
    <name type="primary">GRXS8</name>
    <name type="ordered locus">Os05g0149950</name>
    <name type="ordered locus">LOC_Os05g05730</name>
    <name evidence="5" type="ORF">OsJ_17135</name>
</gene>
<organism>
    <name type="scientific">Oryza sativa subsp. japonica</name>
    <name type="common">Rice</name>
    <dbReference type="NCBI Taxonomy" id="39947"/>
    <lineage>
        <taxon>Eukaryota</taxon>
        <taxon>Viridiplantae</taxon>
        <taxon>Streptophyta</taxon>
        <taxon>Embryophyta</taxon>
        <taxon>Tracheophyta</taxon>
        <taxon>Spermatophyta</taxon>
        <taxon>Magnoliopsida</taxon>
        <taxon>Liliopsida</taxon>
        <taxon>Poales</taxon>
        <taxon>Poaceae</taxon>
        <taxon>BOP clade</taxon>
        <taxon>Oryzoideae</taxon>
        <taxon>Oryzeae</taxon>
        <taxon>Oryzinae</taxon>
        <taxon>Oryza</taxon>
        <taxon>Oryza sativa</taxon>
    </lineage>
</organism>
<protein>
    <recommendedName>
        <fullName>Monothiol glutaredoxin-S8</fullName>
    </recommendedName>
</protein>
<sequence length="114" mass="11740">MDRVTRLASQKAVVVFSKSSCGMSHAVTRLLRELGVDARVVELDEEPAGADMENALAGMLLAGTAANGGGRGRGVVVPTVFIGGRLVGSTDRVMSLHVAGGLVPLLRDAGALWV</sequence>
<accession>P0C290</accession>
<accession>B9FHD7</accession>
<dbReference type="EMBL" id="AC124143">
    <property type="status" value="NOT_ANNOTATED_CDS"/>
    <property type="molecule type" value="Genomic_DNA"/>
</dbReference>
<dbReference type="EMBL" id="AP014961">
    <property type="protein sequence ID" value="BAS92295.1"/>
    <property type="molecule type" value="Genomic_DNA"/>
</dbReference>
<dbReference type="EMBL" id="CM000142">
    <property type="protein sequence ID" value="EEE62346.1"/>
    <property type="molecule type" value="Genomic_DNA"/>
</dbReference>
<dbReference type="RefSeq" id="XP_015640278.1">
    <property type="nucleotide sequence ID" value="XM_015784792.1"/>
</dbReference>
<dbReference type="SMR" id="P0C290"/>
<dbReference type="FunCoup" id="P0C290">
    <property type="interactions" value="19"/>
</dbReference>
<dbReference type="STRING" id="39947.P0C290"/>
<dbReference type="PaxDb" id="39947-P0C290"/>
<dbReference type="EnsemblPlants" id="Os05t0149950-00">
    <property type="protein sequence ID" value="Os05t0149950-00"/>
    <property type="gene ID" value="Os05g0149950"/>
</dbReference>
<dbReference type="Gramene" id="Os05t0149950-00">
    <property type="protein sequence ID" value="Os05t0149950-00"/>
    <property type="gene ID" value="Os05g0149950"/>
</dbReference>
<dbReference type="eggNOG" id="KOG1752">
    <property type="taxonomic scope" value="Eukaryota"/>
</dbReference>
<dbReference type="HOGENOM" id="CLU_026126_6_0_1"/>
<dbReference type="InParanoid" id="P0C290"/>
<dbReference type="OMA" id="EMEWALI"/>
<dbReference type="OrthoDB" id="418495at2759"/>
<dbReference type="Proteomes" id="UP000000763">
    <property type="component" value="Chromosome 5"/>
</dbReference>
<dbReference type="Proteomes" id="UP000007752">
    <property type="component" value="Chromosome 5"/>
</dbReference>
<dbReference type="Proteomes" id="UP000059680">
    <property type="component" value="Chromosome 5"/>
</dbReference>
<dbReference type="GO" id="GO:0005737">
    <property type="term" value="C:cytoplasm"/>
    <property type="evidence" value="ECO:0007669"/>
    <property type="project" value="UniProtKB-SubCell"/>
</dbReference>
<dbReference type="GO" id="GO:0051537">
    <property type="term" value="F:2 iron, 2 sulfur cluster binding"/>
    <property type="evidence" value="ECO:0007669"/>
    <property type="project" value="UniProtKB-KW"/>
</dbReference>
<dbReference type="GO" id="GO:0046872">
    <property type="term" value="F:metal ion binding"/>
    <property type="evidence" value="ECO:0007669"/>
    <property type="project" value="UniProtKB-KW"/>
</dbReference>
<dbReference type="CDD" id="cd03419">
    <property type="entry name" value="GRX_GRXh_1_2_like"/>
    <property type="match status" value="1"/>
</dbReference>
<dbReference type="Gene3D" id="3.40.30.10">
    <property type="entry name" value="Glutaredoxin"/>
    <property type="match status" value="1"/>
</dbReference>
<dbReference type="InterPro" id="IPR011905">
    <property type="entry name" value="GlrX-like_pln_2"/>
</dbReference>
<dbReference type="InterPro" id="IPR002109">
    <property type="entry name" value="Glutaredoxin"/>
</dbReference>
<dbReference type="InterPro" id="IPR036249">
    <property type="entry name" value="Thioredoxin-like_sf"/>
</dbReference>
<dbReference type="NCBIfam" id="TIGR02189">
    <property type="entry name" value="GlrX-like_plant"/>
    <property type="match status" value="1"/>
</dbReference>
<dbReference type="PANTHER" id="PTHR10168">
    <property type="entry name" value="GLUTAREDOXIN"/>
    <property type="match status" value="1"/>
</dbReference>
<dbReference type="Pfam" id="PF00462">
    <property type="entry name" value="Glutaredoxin"/>
    <property type="match status" value="1"/>
</dbReference>
<dbReference type="SUPFAM" id="SSF52833">
    <property type="entry name" value="Thioredoxin-like"/>
    <property type="match status" value="1"/>
</dbReference>
<dbReference type="PROSITE" id="PS51354">
    <property type="entry name" value="GLUTAREDOXIN_2"/>
    <property type="match status" value="1"/>
</dbReference>